<accession>Q9CWY9</accession>
<protein>
    <recommendedName>
        <fullName>RPA-interacting protein</fullName>
    </recommendedName>
</protein>
<organism>
    <name type="scientific">Mus musculus</name>
    <name type="common">Mouse</name>
    <dbReference type="NCBI Taxonomy" id="10090"/>
    <lineage>
        <taxon>Eukaryota</taxon>
        <taxon>Metazoa</taxon>
        <taxon>Chordata</taxon>
        <taxon>Craniata</taxon>
        <taxon>Vertebrata</taxon>
        <taxon>Euteleostomi</taxon>
        <taxon>Mammalia</taxon>
        <taxon>Eutheria</taxon>
        <taxon>Euarchontoglires</taxon>
        <taxon>Glires</taxon>
        <taxon>Rodentia</taxon>
        <taxon>Myomorpha</taxon>
        <taxon>Muroidea</taxon>
        <taxon>Muridae</taxon>
        <taxon>Murinae</taxon>
        <taxon>Mus</taxon>
        <taxon>Mus</taxon>
    </lineage>
</organism>
<evidence type="ECO:0000250" key="1"/>
<evidence type="ECO:0000250" key="2">
    <source>
        <dbReference type="UniProtKB" id="Q86UA6"/>
    </source>
</evidence>
<proteinExistence type="evidence at protein level"/>
<dbReference type="EMBL" id="AK010289">
    <property type="protein sequence ID" value="BAB26825.1"/>
    <property type="molecule type" value="mRNA"/>
</dbReference>
<dbReference type="EMBL" id="AL596136">
    <property type="status" value="NOT_ANNOTATED_CDS"/>
    <property type="molecule type" value="Genomic_DNA"/>
</dbReference>
<dbReference type="EMBL" id="BC047996">
    <property type="protein sequence ID" value="AAH47996.1"/>
    <property type="molecule type" value="mRNA"/>
</dbReference>
<dbReference type="CCDS" id="CCDS24969.1"/>
<dbReference type="RefSeq" id="NP_001239342.1">
    <property type="nucleotide sequence ID" value="NM_001252413.1"/>
</dbReference>
<dbReference type="RefSeq" id="NP_001239343.1">
    <property type="nucleotide sequence ID" value="NM_001252414.1"/>
</dbReference>
<dbReference type="RefSeq" id="NP_001239344.1">
    <property type="nucleotide sequence ID" value="NM_001252415.1"/>
</dbReference>
<dbReference type="RefSeq" id="NP_081462.1">
    <property type="nucleotide sequence ID" value="NM_027186.3"/>
</dbReference>
<dbReference type="FunCoup" id="Q9CWY9">
    <property type="interactions" value="3982"/>
</dbReference>
<dbReference type="STRING" id="10090.ENSMUSP00000018593"/>
<dbReference type="GlyGen" id="Q9CWY9">
    <property type="glycosylation" value="1 site"/>
</dbReference>
<dbReference type="iPTMnet" id="Q9CWY9"/>
<dbReference type="PhosphoSitePlus" id="Q9CWY9"/>
<dbReference type="PaxDb" id="10090-ENSMUSP00000018593"/>
<dbReference type="ProteomicsDB" id="253323"/>
<dbReference type="Antibodypedia" id="23662">
    <property type="antibodies" value="204 antibodies from 28 providers"/>
</dbReference>
<dbReference type="DNASU" id="69723"/>
<dbReference type="Ensembl" id="ENSMUST00000018593.10">
    <property type="protein sequence ID" value="ENSMUSP00000018593.4"/>
    <property type="gene ID" value="ENSMUSG00000018449.13"/>
</dbReference>
<dbReference type="GeneID" id="69723"/>
<dbReference type="KEGG" id="mmu:69723"/>
<dbReference type="UCSC" id="uc007jxa.2">
    <property type="organism name" value="mouse"/>
</dbReference>
<dbReference type="AGR" id="MGI:1916973"/>
<dbReference type="CTD" id="84268"/>
<dbReference type="MGI" id="MGI:1916973">
    <property type="gene designation" value="Rpain"/>
</dbReference>
<dbReference type="VEuPathDB" id="HostDB:ENSMUSG00000018449"/>
<dbReference type="eggNOG" id="ENOG502R0QT">
    <property type="taxonomic scope" value="Eukaryota"/>
</dbReference>
<dbReference type="GeneTree" id="ENSGT00390000006416"/>
<dbReference type="HOGENOM" id="CLU_086690_0_0_1"/>
<dbReference type="InParanoid" id="Q9CWY9"/>
<dbReference type="OMA" id="ACDSWTV"/>
<dbReference type="OrthoDB" id="435311at2759"/>
<dbReference type="PhylomeDB" id="Q9CWY9"/>
<dbReference type="TreeFam" id="TF326215"/>
<dbReference type="BioGRID-ORCS" id="69723">
    <property type="hits" value="20 hits in 112 CRISPR screens"/>
</dbReference>
<dbReference type="ChiTaRS" id="Rpain">
    <property type="organism name" value="mouse"/>
</dbReference>
<dbReference type="PRO" id="PR:Q9CWY9"/>
<dbReference type="Proteomes" id="UP000000589">
    <property type="component" value="Chromosome 11"/>
</dbReference>
<dbReference type="RNAct" id="Q9CWY9">
    <property type="molecule type" value="protein"/>
</dbReference>
<dbReference type="Bgee" id="ENSMUSG00000018449">
    <property type="expression patterns" value="Expressed in spermatid and 232 other cell types or tissues"/>
</dbReference>
<dbReference type="ExpressionAtlas" id="Q9CWY9">
    <property type="expression patterns" value="baseline and differential"/>
</dbReference>
<dbReference type="GO" id="GO:0005737">
    <property type="term" value="C:cytoplasm"/>
    <property type="evidence" value="ECO:0000266"/>
    <property type="project" value="MGI"/>
</dbReference>
<dbReference type="GO" id="GO:0001650">
    <property type="term" value="C:fibrillar center"/>
    <property type="evidence" value="ECO:0007669"/>
    <property type="project" value="Ensembl"/>
</dbReference>
<dbReference type="GO" id="GO:0016605">
    <property type="term" value="C:PML body"/>
    <property type="evidence" value="ECO:0000266"/>
    <property type="project" value="MGI"/>
</dbReference>
<dbReference type="GO" id="GO:0044877">
    <property type="term" value="F:protein-containing complex binding"/>
    <property type="evidence" value="ECO:0000266"/>
    <property type="project" value="MGI"/>
</dbReference>
<dbReference type="GO" id="GO:0008270">
    <property type="term" value="F:zinc ion binding"/>
    <property type="evidence" value="ECO:0007669"/>
    <property type="project" value="UniProtKB-KW"/>
</dbReference>
<dbReference type="GO" id="GO:0006310">
    <property type="term" value="P:DNA recombination"/>
    <property type="evidence" value="ECO:0000266"/>
    <property type="project" value="MGI"/>
</dbReference>
<dbReference type="GO" id="GO:0006281">
    <property type="term" value="P:DNA repair"/>
    <property type="evidence" value="ECO:0000266"/>
    <property type="project" value="MGI"/>
</dbReference>
<dbReference type="GO" id="GO:0006261">
    <property type="term" value="P:DNA-templated DNA replication"/>
    <property type="evidence" value="ECO:0000266"/>
    <property type="project" value="MGI"/>
</dbReference>
<dbReference type="GO" id="GO:0006606">
    <property type="term" value="P:protein import into nucleus"/>
    <property type="evidence" value="ECO:0000266"/>
    <property type="project" value="MGI"/>
</dbReference>
<dbReference type="GO" id="GO:0009411">
    <property type="term" value="P:response to UV"/>
    <property type="evidence" value="ECO:0000266"/>
    <property type="project" value="MGI"/>
</dbReference>
<dbReference type="InterPro" id="IPR028156">
    <property type="entry name" value="RIP"/>
</dbReference>
<dbReference type="InterPro" id="IPR028159">
    <property type="entry name" value="RPA_interact_C_dom"/>
</dbReference>
<dbReference type="InterPro" id="IPR028155">
    <property type="entry name" value="RPA_interact_central"/>
</dbReference>
<dbReference type="InterPro" id="IPR028158">
    <property type="entry name" value="RPA_interact_N_dom"/>
</dbReference>
<dbReference type="PANTHER" id="PTHR31742:SF1">
    <property type="entry name" value="RPA-INTERACTING PROTEIN"/>
    <property type="match status" value="1"/>
</dbReference>
<dbReference type="PANTHER" id="PTHR31742">
    <property type="entry name" value="RPA-INTERACTING PROTEIN RPAIN"/>
    <property type="match status" value="1"/>
</dbReference>
<dbReference type="Pfam" id="PF14768">
    <property type="entry name" value="RPA_interact_C"/>
    <property type="match status" value="1"/>
</dbReference>
<dbReference type="Pfam" id="PF14767">
    <property type="entry name" value="RPA_interact_M"/>
    <property type="match status" value="1"/>
</dbReference>
<dbReference type="Pfam" id="PF14766">
    <property type="entry name" value="RPA_interact_N"/>
    <property type="match status" value="1"/>
</dbReference>
<name>RIP_MOUSE</name>
<sequence>MAESSGSPHRLLYKQVGSPHWKETFRQGCLERMRNSRHRLLNKYRQAAGSTPGTASDRLLVQEVMEEEWASLQSVENCPEALLQLELPLDLAVLQDIEQELCNEEKSIISEYEEDLEFDESCLRRMLAEWEANSLICPVCIKYNLRIMNSVVTCPCGLHIPVHSTDLTEQKLRACLEENVNEHSVHCPHTPVFSVTGGTEEKPSLLMNCLTCDTWAVIL</sequence>
<gene>
    <name type="primary">Rpain</name>
    <name type="synonym">Rip</name>
</gene>
<comment type="function">
    <text evidence="1">Mediates the import of RPA complex into the nucleus, possibly via some interaction with importin beta. Sumoylation mediates the localization of RPA complex into the PML body of the nucleus, thereby participating in RPA function in DNA metabolism (By similarity).</text>
</comment>
<comment type="subunit">
    <text evidence="1">Interacts with the RPA1 subunit of RPA complex.</text>
</comment>
<comment type="subcellular location">
    <subcellularLocation>
        <location evidence="1">Nucleus</location>
    </subcellularLocation>
</comment>
<comment type="PTM">
    <text evidence="1">Sumoylated; required for localization in the nuclear PML body and transport of RPA complex in PML body. Upon UV irradiation and during S phase, it is desumoylated, releasing RPA complex that is translocated to sites of DNA damage. Sumoylation takes place at different Lys residues (By similarity).</text>
</comment>
<reference key="1">
    <citation type="journal article" date="2005" name="Science">
        <title>The transcriptional landscape of the mammalian genome.</title>
        <authorList>
            <person name="Carninci P."/>
            <person name="Kasukawa T."/>
            <person name="Katayama S."/>
            <person name="Gough J."/>
            <person name="Frith M.C."/>
            <person name="Maeda N."/>
            <person name="Oyama R."/>
            <person name="Ravasi T."/>
            <person name="Lenhard B."/>
            <person name="Wells C."/>
            <person name="Kodzius R."/>
            <person name="Shimokawa K."/>
            <person name="Bajic V.B."/>
            <person name="Brenner S.E."/>
            <person name="Batalov S."/>
            <person name="Forrest A.R."/>
            <person name="Zavolan M."/>
            <person name="Davis M.J."/>
            <person name="Wilming L.G."/>
            <person name="Aidinis V."/>
            <person name="Allen J.E."/>
            <person name="Ambesi-Impiombato A."/>
            <person name="Apweiler R."/>
            <person name="Aturaliya R.N."/>
            <person name="Bailey T.L."/>
            <person name="Bansal M."/>
            <person name="Baxter L."/>
            <person name="Beisel K.W."/>
            <person name="Bersano T."/>
            <person name="Bono H."/>
            <person name="Chalk A.M."/>
            <person name="Chiu K.P."/>
            <person name="Choudhary V."/>
            <person name="Christoffels A."/>
            <person name="Clutterbuck D.R."/>
            <person name="Crowe M.L."/>
            <person name="Dalla E."/>
            <person name="Dalrymple B.P."/>
            <person name="de Bono B."/>
            <person name="Della Gatta G."/>
            <person name="di Bernardo D."/>
            <person name="Down T."/>
            <person name="Engstrom P."/>
            <person name="Fagiolini M."/>
            <person name="Faulkner G."/>
            <person name="Fletcher C.F."/>
            <person name="Fukushima T."/>
            <person name="Furuno M."/>
            <person name="Futaki S."/>
            <person name="Gariboldi M."/>
            <person name="Georgii-Hemming P."/>
            <person name="Gingeras T.R."/>
            <person name="Gojobori T."/>
            <person name="Green R.E."/>
            <person name="Gustincich S."/>
            <person name="Harbers M."/>
            <person name="Hayashi Y."/>
            <person name="Hensch T.K."/>
            <person name="Hirokawa N."/>
            <person name="Hill D."/>
            <person name="Huminiecki L."/>
            <person name="Iacono M."/>
            <person name="Ikeo K."/>
            <person name="Iwama A."/>
            <person name="Ishikawa T."/>
            <person name="Jakt M."/>
            <person name="Kanapin A."/>
            <person name="Katoh M."/>
            <person name="Kawasawa Y."/>
            <person name="Kelso J."/>
            <person name="Kitamura H."/>
            <person name="Kitano H."/>
            <person name="Kollias G."/>
            <person name="Krishnan S.P."/>
            <person name="Kruger A."/>
            <person name="Kummerfeld S.K."/>
            <person name="Kurochkin I.V."/>
            <person name="Lareau L.F."/>
            <person name="Lazarevic D."/>
            <person name="Lipovich L."/>
            <person name="Liu J."/>
            <person name="Liuni S."/>
            <person name="McWilliam S."/>
            <person name="Madan Babu M."/>
            <person name="Madera M."/>
            <person name="Marchionni L."/>
            <person name="Matsuda H."/>
            <person name="Matsuzawa S."/>
            <person name="Miki H."/>
            <person name="Mignone F."/>
            <person name="Miyake S."/>
            <person name="Morris K."/>
            <person name="Mottagui-Tabar S."/>
            <person name="Mulder N."/>
            <person name="Nakano N."/>
            <person name="Nakauchi H."/>
            <person name="Ng P."/>
            <person name="Nilsson R."/>
            <person name="Nishiguchi S."/>
            <person name="Nishikawa S."/>
            <person name="Nori F."/>
            <person name="Ohara O."/>
            <person name="Okazaki Y."/>
            <person name="Orlando V."/>
            <person name="Pang K.C."/>
            <person name="Pavan W.J."/>
            <person name="Pavesi G."/>
            <person name="Pesole G."/>
            <person name="Petrovsky N."/>
            <person name="Piazza S."/>
            <person name="Reed J."/>
            <person name="Reid J.F."/>
            <person name="Ring B.Z."/>
            <person name="Ringwald M."/>
            <person name="Rost B."/>
            <person name="Ruan Y."/>
            <person name="Salzberg S.L."/>
            <person name="Sandelin A."/>
            <person name="Schneider C."/>
            <person name="Schoenbach C."/>
            <person name="Sekiguchi K."/>
            <person name="Semple C.A."/>
            <person name="Seno S."/>
            <person name="Sessa L."/>
            <person name="Sheng Y."/>
            <person name="Shibata Y."/>
            <person name="Shimada H."/>
            <person name="Shimada K."/>
            <person name="Silva D."/>
            <person name="Sinclair B."/>
            <person name="Sperling S."/>
            <person name="Stupka E."/>
            <person name="Sugiura K."/>
            <person name="Sultana R."/>
            <person name="Takenaka Y."/>
            <person name="Taki K."/>
            <person name="Tammoja K."/>
            <person name="Tan S.L."/>
            <person name="Tang S."/>
            <person name="Taylor M.S."/>
            <person name="Tegner J."/>
            <person name="Teichmann S.A."/>
            <person name="Ueda H.R."/>
            <person name="van Nimwegen E."/>
            <person name="Verardo R."/>
            <person name="Wei C.L."/>
            <person name="Yagi K."/>
            <person name="Yamanishi H."/>
            <person name="Zabarovsky E."/>
            <person name="Zhu S."/>
            <person name="Zimmer A."/>
            <person name="Hide W."/>
            <person name="Bult C."/>
            <person name="Grimmond S.M."/>
            <person name="Teasdale R.D."/>
            <person name="Liu E.T."/>
            <person name="Brusic V."/>
            <person name="Quackenbush J."/>
            <person name="Wahlestedt C."/>
            <person name="Mattick J.S."/>
            <person name="Hume D.A."/>
            <person name="Kai C."/>
            <person name="Sasaki D."/>
            <person name="Tomaru Y."/>
            <person name="Fukuda S."/>
            <person name="Kanamori-Katayama M."/>
            <person name="Suzuki M."/>
            <person name="Aoki J."/>
            <person name="Arakawa T."/>
            <person name="Iida J."/>
            <person name="Imamura K."/>
            <person name="Itoh M."/>
            <person name="Kato T."/>
            <person name="Kawaji H."/>
            <person name="Kawagashira N."/>
            <person name="Kawashima T."/>
            <person name="Kojima M."/>
            <person name="Kondo S."/>
            <person name="Konno H."/>
            <person name="Nakano K."/>
            <person name="Ninomiya N."/>
            <person name="Nishio T."/>
            <person name="Okada M."/>
            <person name="Plessy C."/>
            <person name="Shibata K."/>
            <person name="Shiraki T."/>
            <person name="Suzuki S."/>
            <person name="Tagami M."/>
            <person name="Waki K."/>
            <person name="Watahiki A."/>
            <person name="Okamura-Oho Y."/>
            <person name="Suzuki H."/>
            <person name="Kawai J."/>
            <person name="Hayashizaki Y."/>
        </authorList>
    </citation>
    <scope>NUCLEOTIDE SEQUENCE [LARGE SCALE MRNA]</scope>
    <source>
        <strain>C57BL/6J</strain>
    </source>
</reference>
<reference key="2">
    <citation type="journal article" date="2009" name="PLoS Biol.">
        <title>Lineage-specific biology revealed by a finished genome assembly of the mouse.</title>
        <authorList>
            <person name="Church D.M."/>
            <person name="Goodstadt L."/>
            <person name="Hillier L.W."/>
            <person name="Zody M.C."/>
            <person name="Goldstein S."/>
            <person name="She X."/>
            <person name="Bult C.J."/>
            <person name="Agarwala R."/>
            <person name="Cherry J.L."/>
            <person name="DiCuccio M."/>
            <person name="Hlavina W."/>
            <person name="Kapustin Y."/>
            <person name="Meric P."/>
            <person name="Maglott D."/>
            <person name="Birtle Z."/>
            <person name="Marques A.C."/>
            <person name="Graves T."/>
            <person name="Zhou S."/>
            <person name="Teague B."/>
            <person name="Potamousis K."/>
            <person name="Churas C."/>
            <person name="Place M."/>
            <person name="Herschleb J."/>
            <person name="Runnheim R."/>
            <person name="Forrest D."/>
            <person name="Amos-Landgraf J."/>
            <person name="Schwartz D.C."/>
            <person name="Cheng Z."/>
            <person name="Lindblad-Toh K."/>
            <person name="Eichler E.E."/>
            <person name="Ponting C.P."/>
        </authorList>
    </citation>
    <scope>NUCLEOTIDE SEQUENCE [LARGE SCALE GENOMIC DNA]</scope>
    <source>
        <strain>C57BL/6J</strain>
    </source>
</reference>
<reference key="3">
    <citation type="journal article" date="2004" name="Genome Res.">
        <title>The status, quality, and expansion of the NIH full-length cDNA project: the Mammalian Gene Collection (MGC).</title>
        <authorList>
            <consortium name="The MGC Project Team"/>
        </authorList>
    </citation>
    <scope>NUCLEOTIDE SEQUENCE [LARGE SCALE MRNA]</scope>
    <source>
        <tissue>Limb</tissue>
    </source>
</reference>
<reference key="4">
    <citation type="journal article" date="2010" name="Cell">
        <title>A tissue-specific atlas of mouse protein phosphorylation and expression.</title>
        <authorList>
            <person name="Huttlin E.L."/>
            <person name="Jedrychowski M.P."/>
            <person name="Elias J.E."/>
            <person name="Goswami T."/>
            <person name="Rad R."/>
            <person name="Beausoleil S.A."/>
            <person name="Villen J."/>
            <person name="Haas W."/>
            <person name="Sowa M.E."/>
            <person name="Gygi S.P."/>
        </authorList>
    </citation>
    <scope>IDENTIFICATION BY MASS SPECTROMETRY [LARGE SCALE ANALYSIS]</scope>
    <source>
        <tissue>Spleen</tissue>
    </source>
</reference>
<keyword id="KW-0479">Metal-binding</keyword>
<keyword id="KW-0539">Nucleus</keyword>
<keyword id="KW-0597">Phosphoprotein</keyword>
<keyword id="KW-1185">Reference proteome</keyword>
<keyword id="KW-0832">Ubl conjugation</keyword>
<keyword id="KW-0862">Zinc</keyword>
<keyword id="KW-0863">Zinc-finger</keyword>
<feature type="chain" id="PRO_0000076300" description="RPA-interacting protein">
    <location>
        <begin position="1"/>
        <end position="219"/>
    </location>
</feature>
<feature type="zinc finger region" description="RIP-type">
    <location>
        <begin position="137"/>
        <end position="212"/>
    </location>
</feature>
<feature type="region of interest" description="Mediates nuclear export" evidence="1">
    <location>
        <begin position="164"/>
        <end position="180"/>
    </location>
</feature>
<feature type="modified residue" description="Phosphoserine" evidence="2">
    <location>
        <position position="18"/>
    </location>
</feature>